<keyword id="KW-0002">3D-structure</keyword>
<keyword id="KW-0938">Abscisic acid signaling pathway</keyword>
<keyword id="KW-0007">Acetylation</keyword>
<keyword id="KW-1003">Cell membrane</keyword>
<keyword id="KW-0963">Cytoplasm</keyword>
<keyword id="KW-0472">Membrane</keyword>
<keyword id="KW-0539">Nucleus</keyword>
<keyword id="KW-0650">Protein phosphatase inhibitor</keyword>
<keyword id="KW-0675">Receptor</keyword>
<keyword id="KW-1185">Reference proteome</keyword>
<comment type="function">
    <text evidence="5 6 8 9 10 11">Receptor for abscisic acid (ABA) required for ABA-mediated responses such as stomatal closure and germination inhibition. Inhibits the activity of group-A protein phosphatases type 2C (PP2Cs) when activated by ABA (PubMed:19407143, PubMed:19855379, PubMed:19893533, PubMed:19898420, PubMed:21658606, PubMed:23844015). Can be activated by both (-)-ABA and (+)-ABA (PubMed:23844015).</text>
</comment>
<comment type="subunit">
    <text evidence="4 6 7 8 9 10 13">Homodimer (PubMed:19898420, PubMed:21658606). Binds ABA on one subunit only. Interacts with HAB1, ABI1 and ABI2, and possibly with other PP2Cs (PubMed:19407142, PubMed:19855379, PubMed:19874541, PubMed:19893533, PubMed:19898420). Binds to CARs protein in an ABA-independent manner, both at the plasma membrane and in the nucleus. Interacts directly with CAR1 and CAR4 (PubMed:25465408).</text>
</comment>
<comment type="interaction">
    <interactant intactId="EBI-2363104">
        <id>Q8VZS8</id>
    </interactant>
    <interactant intactId="EBI-782526">
        <id>P49597</id>
        <label>ABI1</label>
    </interactant>
    <organismsDiffer>false</organismsDiffer>
    <experiments>13</experiments>
</comment>
<comment type="interaction">
    <interactant intactId="EBI-2363104">
        <id>Q8VZS8</id>
    </interactant>
    <interactant intactId="EBI-15803514">
        <id>O04719-1</id>
        <label>ABI2</label>
    </interactant>
    <organismsDiffer>false</organismsDiffer>
    <experiments>2</experiments>
</comment>
<comment type="interaction">
    <interactant intactId="EBI-2363104">
        <id>Q8VZS8</id>
    </interactant>
    <interactant intactId="EBI-2309302">
        <id>Q9CAJ0</id>
        <label>HAB1</label>
    </interactant>
    <organismsDiffer>false</organismsDiffer>
    <experiments>7</experiments>
</comment>
<comment type="interaction">
    <interactant intactId="EBI-2363104">
        <id>Q8VZS8</id>
    </interactant>
    <interactant intactId="EBI-2363104">
        <id>Q8VZS8</id>
        <label>PYL1</label>
    </interactant>
    <organismsDiffer>false</organismsDiffer>
    <experiments>3</experiments>
</comment>
<comment type="interaction">
    <interactant intactId="EBI-2363104">
        <id>Q8VZS8</id>
    </interactant>
    <interactant intactId="EBI-4424568">
        <id>Q9LVG2</id>
        <label>TOE2</label>
    </interactant>
    <organismsDiffer>false</organismsDiffer>
    <experiments>3</experiments>
</comment>
<comment type="subcellular location">
    <subcellularLocation>
        <location evidence="2">Cytoplasm</location>
    </subcellularLocation>
    <subcellularLocation>
        <location evidence="13">Nucleus</location>
    </subcellularLocation>
    <subcellularLocation>
        <location evidence="13">Cell membrane</location>
    </subcellularLocation>
    <text evidence="13">Localizes at the plasma membrane in the presence of a CAR protein (e.g. CAR1 and CAR4).</text>
</comment>
<comment type="domain">
    <text evidence="9">Upon interaction with ABA, the 'latch' and 'gate' loops change in conformation leading to a tight dimerization and the creation a surface that enables the receptor to dock into and inhibit the PP2C active site.</text>
</comment>
<comment type="miscellaneous">
    <text>The synthetic growth inhibitor pyrabactin inhibits ABA-binding and subsequent PP2Cs inhibitor properties.</text>
</comment>
<comment type="similarity">
    <text evidence="14">Belongs to the PYR/PYL/RCAR abscisic acid intracellular receptor family.</text>
</comment>
<comment type="sequence caution" evidence="14">
    <conflict type="erroneous initiation">
        <sequence resource="EMBL-CDS" id="BAB08923"/>
    </conflict>
    <text>Truncated N-terminus.</text>
</comment>
<dbReference type="EMBL" id="AB016882">
    <property type="protein sequence ID" value="BAB08923.1"/>
    <property type="status" value="ALT_INIT"/>
    <property type="molecule type" value="Genomic_DNA"/>
</dbReference>
<dbReference type="EMBL" id="CP002688">
    <property type="protein sequence ID" value="AED95426.1"/>
    <property type="molecule type" value="Genomic_DNA"/>
</dbReference>
<dbReference type="EMBL" id="CP002688">
    <property type="protein sequence ID" value="ANM69642.1"/>
    <property type="molecule type" value="Genomic_DNA"/>
</dbReference>
<dbReference type="EMBL" id="AY063877">
    <property type="protein sequence ID" value="AAL36233.1"/>
    <property type="molecule type" value="mRNA"/>
</dbReference>
<dbReference type="EMBL" id="AY117328">
    <property type="protein sequence ID" value="AAM51403.1"/>
    <property type="molecule type" value="mRNA"/>
</dbReference>
<dbReference type="RefSeq" id="NP_001331305.1">
    <property type="nucleotide sequence ID" value="NM_001344698.1"/>
</dbReference>
<dbReference type="RefSeq" id="NP_199491.2">
    <property type="nucleotide sequence ID" value="NM_124049.5"/>
</dbReference>
<dbReference type="PDB" id="3JRQ">
    <property type="method" value="X-ray"/>
    <property type="resolution" value="2.10 A"/>
    <property type="chains" value="B=28-210"/>
</dbReference>
<dbReference type="PDB" id="3JRS">
    <property type="method" value="X-ray"/>
    <property type="resolution" value="2.05 A"/>
    <property type="chains" value="A/B/C=8-211"/>
</dbReference>
<dbReference type="PDB" id="3KAY">
    <property type="method" value="X-ray"/>
    <property type="resolution" value="2.40 A"/>
    <property type="chains" value="A/B=36-211"/>
</dbReference>
<dbReference type="PDB" id="3KDJ">
    <property type="method" value="X-ray"/>
    <property type="resolution" value="1.88 A"/>
    <property type="chains" value="A=20-221"/>
</dbReference>
<dbReference type="PDB" id="3NEF">
    <property type="method" value="X-ray"/>
    <property type="resolution" value="2.40 A"/>
    <property type="chains" value="A/B=20-221"/>
</dbReference>
<dbReference type="PDB" id="3NEG">
    <property type="method" value="X-ray"/>
    <property type="resolution" value="2.80 A"/>
    <property type="chains" value="A/B=20-221"/>
</dbReference>
<dbReference type="PDB" id="3NMN">
    <property type="method" value="X-ray"/>
    <property type="resolution" value="2.15 A"/>
    <property type="chains" value="A/C=36-211"/>
</dbReference>
<dbReference type="PDB" id="9J6I">
    <property type="method" value="X-ray"/>
    <property type="resolution" value="2.30 A"/>
    <property type="chains" value="A/B=36-210"/>
</dbReference>
<dbReference type="PDBsum" id="3JRQ"/>
<dbReference type="PDBsum" id="3JRS"/>
<dbReference type="PDBsum" id="3KAY"/>
<dbReference type="PDBsum" id="3KDJ"/>
<dbReference type="PDBsum" id="3NEF"/>
<dbReference type="PDBsum" id="3NEG"/>
<dbReference type="PDBsum" id="3NMN"/>
<dbReference type="PDBsum" id="9J6I"/>
<dbReference type="SMR" id="Q8VZS8"/>
<dbReference type="BioGRID" id="19970">
    <property type="interactions" value="8"/>
</dbReference>
<dbReference type="ComplexPortal" id="CPX-3561">
    <property type="entry name" value="PYL1 ABA receptor complex"/>
</dbReference>
<dbReference type="DIP" id="DIP-48581N"/>
<dbReference type="FunCoup" id="Q8VZS8">
    <property type="interactions" value="481"/>
</dbReference>
<dbReference type="IntAct" id="Q8VZS8">
    <property type="interactions" value="6"/>
</dbReference>
<dbReference type="MINT" id="Q8VZS8"/>
<dbReference type="STRING" id="3702.Q8VZS8"/>
<dbReference type="BindingDB" id="Q8VZS8"/>
<dbReference type="iPTMnet" id="Q8VZS8"/>
<dbReference type="PaxDb" id="3702-AT5G46790.1"/>
<dbReference type="ProteomicsDB" id="226140"/>
<dbReference type="EnsemblPlants" id="AT5G46790.1">
    <property type="protein sequence ID" value="AT5G46790.1"/>
    <property type="gene ID" value="AT5G46790"/>
</dbReference>
<dbReference type="EnsemblPlants" id="AT5G46790.2">
    <property type="protein sequence ID" value="AT5G46790.2"/>
    <property type="gene ID" value="AT5G46790"/>
</dbReference>
<dbReference type="GeneID" id="834722"/>
<dbReference type="Gramene" id="AT5G46790.1">
    <property type="protein sequence ID" value="AT5G46790.1"/>
    <property type="gene ID" value="AT5G46790"/>
</dbReference>
<dbReference type="Gramene" id="AT5G46790.2">
    <property type="protein sequence ID" value="AT5G46790.2"/>
    <property type="gene ID" value="AT5G46790"/>
</dbReference>
<dbReference type="KEGG" id="ath:AT5G46790"/>
<dbReference type="Araport" id="AT5G46790"/>
<dbReference type="TAIR" id="AT5G46790">
    <property type="gene designation" value="PYL1"/>
</dbReference>
<dbReference type="eggNOG" id="ENOG502QW1M">
    <property type="taxonomic scope" value="Eukaryota"/>
</dbReference>
<dbReference type="HOGENOM" id="CLU_077517_0_1_1"/>
<dbReference type="InParanoid" id="Q8VZS8"/>
<dbReference type="OMA" id="FHSYRIN"/>
<dbReference type="PhylomeDB" id="Q8VZS8"/>
<dbReference type="EvolutionaryTrace" id="Q8VZS8"/>
<dbReference type="PRO" id="PR:Q8VZS8"/>
<dbReference type="Proteomes" id="UP000006548">
    <property type="component" value="Chromosome 5"/>
</dbReference>
<dbReference type="ExpressionAtlas" id="Q8VZS8">
    <property type="expression patterns" value="baseline and differential"/>
</dbReference>
<dbReference type="GO" id="GO:0005737">
    <property type="term" value="C:cytoplasm"/>
    <property type="evidence" value="ECO:0000250"/>
    <property type="project" value="UniProtKB"/>
</dbReference>
<dbReference type="GO" id="GO:0005634">
    <property type="term" value="C:nucleus"/>
    <property type="evidence" value="ECO:0000250"/>
    <property type="project" value="UniProtKB"/>
</dbReference>
<dbReference type="GO" id="GO:0005886">
    <property type="term" value="C:plasma membrane"/>
    <property type="evidence" value="ECO:0007669"/>
    <property type="project" value="UniProtKB-SubCell"/>
</dbReference>
<dbReference type="GO" id="GO:0009536">
    <property type="term" value="C:plastid"/>
    <property type="evidence" value="ECO:0007005"/>
    <property type="project" value="TAIR"/>
</dbReference>
<dbReference type="GO" id="GO:0062049">
    <property type="term" value="C:protein phosphatase inhibitor complex"/>
    <property type="evidence" value="ECO:0000353"/>
    <property type="project" value="ComplexPortal"/>
</dbReference>
<dbReference type="GO" id="GO:0010427">
    <property type="term" value="F:abscisic acid binding"/>
    <property type="evidence" value="ECO:0000314"/>
    <property type="project" value="TAIR"/>
</dbReference>
<dbReference type="GO" id="GO:0042802">
    <property type="term" value="F:identical protein binding"/>
    <property type="evidence" value="ECO:0000353"/>
    <property type="project" value="IntAct"/>
</dbReference>
<dbReference type="GO" id="GO:0042803">
    <property type="term" value="F:protein homodimerization activity"/>
    <property type="evidence" value="ECO:0000314"/>
    <property type="project" value="UniProtKB"/>
</dbReference>
<dbReference type="GO" id="GO:0004864">
    <property type="term" value="F:protein phosphatase inhibitor activity"/>
    <property type="evidence" value="ECO:0000314"/>
    <property type="project" value="UniProtKB"/>
</dbReference>
<dbReference type="GO" id="GO:0038023">
    <property type="term" value="F:signaling receptor activity"/>
    <property type="evidence" value="ECO:0000314"/>
    <property type="project" value="UniProtKB"/>
</dbReference>
<dbReference type="GO" id="GO:0009738">
    <property type="term" value="P:abscisic acid-activated signaling pathway"/>
    <property type="evidence" value="ECO:0000314"/>
    <property type="project" value="UniProtKB"/>
</dbReference>
<dbReference type="GO" id="GO:0006952">
    <property type="term" value="P:defense response"/>
    <property type="evidence" value="ECO:0000270"/>
    <property type="project" value="TAIR"/>
</dbReference>
<dbReference type="CDD" id="cd07821">
    <property type="entry name" value="PYR_PYL_RCAR_like"/>
    <property type="match status" value="1"/>
</dbReference>
<dbReference type="FunFam" id="3.30.530.20:FF:000019">
    <property type="entry name" value="Abscisic acid receptor PYR1"/>
    <property type="match status" value="1"/>
</dbReference>
<dbReference type="Gene3D" id="3.30.530.20">
    <property type="match status" value="1"/>
</dbReference>
<dbReference type="InterPro" id="IPR050279">
    <property type="entry name" value="Plant_def-hormone_signal"/>
</dbReference>
<dbReference type="InterPro" id="IPR019587">
    <property type="entry name" value="Polyketide_cyclase/dehydratase"/>
</dbReference>
<dbReference type="InterPro" id="IPR023393">
    <property type="entry name" value="START-like_dom_sf"/>
</dbReference>
<dbReference type="PANTHER" id="PTHR31213:SF73">
    <property type="entry name" value="ABSCISIC ACID RECEPTOR PYL1"/>
    <property type="match status" value="1"/>
</dbReference>
<dbReference type="PANTHER" id="PTHR31213">
    <property type="entry name" value="OS08G0374000 PROTEIN-RELATED"/>
    <property type="match status" value="1"/>
</dbReference>
<dbReference type="Pfam" id="PF10604">
    <property type="entry name" value="Polyketide_cyc2"/>
    <property type="match status" value="1"/>
</dbReference>
<dbReference type="SUPFAM" id="SSF55961">
    <property type="entry name" value="Bet v1-like"/>
    <property type="match status" value="1"/>
</dbReference>
<protein>
    <recommendedName>
        <fullName>Abscisic acid receptor PYL1</fullName>
    </recommendedName>
    <alternativeName>
        <fullName>ABI1-binding protein 6</fullName>
    </alternativeName>
    <alternativeName>
        <fullName>PYR1-like protein 1</fullName>
    </alternativeName>
    <alternativeName>
        <fullName>Regulatory components of ABA receptor 9</fullName>
    </alternativeName>
</protein>
<evidence type="ECO:0000250" key="1">
    <source>
        <dbReference type="UniProtKB" id="O49686"/>
    </source>
</evidence>
<evidence type="ECO:0000250" key="2">
    <source>
        <dbReference type="UniProtKB" id="Q9FLB1"/>
    </source>
</evidence>
<evidence type="ECO:0000256" key="3">
    <source>
        <dbReference type="SAM" id="MobiDB-lite"/>
    </source>
</evidence>
<evidence type="ECO:0000269" key="4">
    <source>
    </source>
</evidence>
<evidence type="ECO:0000269" key="5">
    <source>
    </source>
</evidence>
<evidence type="ECO:0000269" key="6">
    <source>
    </source>
</evidence>
<evidence type="ECO:0000269" key="7">
    <source>
    </source>
</evidence>
<evidence type="ECO:0000269" key="8">
    <source>
    </source>
</evidence>
<evidence type="ECO:0000269" key="9">
    <source>
    </source>
</evidence>
<evidence type="ECO:0000269" key="10">
    <source>
    </source>
</evidence>
<evidence type="ECO:0000269" key="11">
    <source>
    </source>
</evidence>
<evidence type="ECO:0000269" key="12">
    <source>
    </source>
</evidence>
<evidence type="ECO:0000269" key="13">
    <source>
    </source>
</evidence>
<evidence type="ECO:0000305" key="14"/>
<evidence type="ECO:0007744" key="15">
    <source>
    </source>
</evidence>
<evidence type="ECO:0007829" key="16">
    <source>
        <dbReference type="PDB" id="3KDJ"/>
    </source>
</evidence>
<evidence type="ECO:0007829" key="17">
    <source>
        <dbReference type="PDB" id="3NEG"/>
    </source>
</evidence>
<evidence type="ECO:0007829" key="18">
    <source>
        <dbReference type="PDB" id="9J6I"/>
    </source>
</evidence>
<organism>
    <name type="scientific">Arabidopsis thaliana</name>
    <name type="common">Mouse-ear cress</name>
    <dbReference type="NCBI Taxonomy" id="3702"/>
    <lineage>
        <taxon>Eukaryota</taxon>
        <taxon>Viridiplantae</taxon>
        <taxon>Streptophyta</taxon>
        <taxon>Embryophyta</taxon>
        <taxon>Tracheophyta</taxon>
        <taxon>Spermatophyta</taxon>
        <taxon>Magnoliopsida</taxon>
        <taxon>eudicotyledons</taxon>
        <taxon>Gunneridae</taxon>
        <taxon>Pentapetalae</taxon>
        <taxon>rosids</taxon>
        <taxon>malvids</taxon>
        <taxon>Brassicales</taxon>
        <taxon>Brassicaceae</taxon>
        <taxon>Camelineae</taxon>
        <taxon>Arabidopsis</taxon>
    </lineage>
</organism>
<feature type="initiator methionine" description="Removed" evidence="15">
    <location>
        <position position="1"/>
    </location>
</feature>
<feature type="chain" id="PRO_0000391736" description="Abscisic acid receptor PYL1">
    <location>
        <begin position="2"/>
        <end position="221"/>
    </location>
</feature>
<feature type="region of interest" description="Disordered" evidence="3">
    <location>
        <begin position="1"/>
        <end position="22"/>
    </location>
</feature>
<feature type="region of interest" description="START-like">
    <location>
        <begin position="50"/>
        <end position="206"/>
    </location>
</feature>
<feature type="short sequence motif" description="Gate loop" evidence="9">
    <location>
        <begin position="112"/>
        <end position="116"/>
    </location>
</feature>
<feature type="short sequence motif" description="Latch loop" evidence="9">
    <location>
        <begin position="142"/>
        <end position="144"/>
    </location>
</feature>
<feature type="compositionally biased region" description="Low complexity" evidence="3">
    <location>
        <begin position="1"/>
        <end position="11"/>
    </location>
</feature>
<feature type="binding site" evidence="6 8">
    <location>
        <position position="86"/>
    </location>
    <ligand>
        <name>abscisate</name>
        <dbReference type="ChEBI" id="CHEBI:62432"/>
    </ligand>
</feature>
<feature type="binding site" evidence="6 8">
    <location>
        <begin position="116"/>
        <end position="121"/>
    </location>
    <ligand>
        <name>abscisate</name>
        <dbReference type="ChEBI" id="CHEBI:62432"/>
    </ligand>
</feature>
<feature type="binding site" evidence="6 8">
    <location>
        <begin position="143"/>
        <end position="149"/>
    </location>
    <ligand>
        <name>abscisate</name>
        <dbReference type="ChEBI" id="CHEBI:62432"/>
    </ligand>
</feature>
<feature type="binding site" evidence="6 8">
    <location>
        <position position="171"/>
    </location>
    <ligand>
        <name>abscisate</name>
        <dbReference type="ChEBI" id="CHEBI:62432"/>
    </ligand>
</feature>
<feature type="site" description="Involved in interactions with PP2Cs" evidence="6">
    <location>
        <position position="115"/>
    </location>
</feature>
<feature type="site" description="Involved in interactions with PP2Cs" evidence="1">
    <location>
        <position position="182"/>
    </location>
</feature>
<feature type="modified residue" description="N-acetylalanine" evidence="15">
    <location>
        <position position="2"/>
    </location>
</feature>
<feature type="mutagenesis site" description="Normal affinity for ABI1. Forms monomers and exhibits normal ABA affinity; when associated by A-88 and S-90." evidence="6 12">
    <original>H</original>
    <variation>A</variation>
    <location>
        <position position="87"/>
    </location>
</feature>
<feature type="mutagenesis site" description="Reduced affinity for ABI1. Forms monomers and exhibits normal ABA affinity; when associated by A-87 and S-90." evidence="6 12">
    <original>F</original>
    <variation>A</variation>
    <location>
        <position position="88"/>
    </location>
</feature>
<feature type="mutagenesis site" description="Forms monomers and exhibits normal ABA affinity; when associated by A-87 and A-88." evidence="12">
    <original>K</original>
    <variation>S</variation>
    <location>
        <position position="90"/>
    </location>
</feature>
<feature type="mutagenesis site" description="Normal affinity for ABI1." evidence="6">
    <original>I</original>
    <variation>A</variation>
    <location>
        <position position="111"/>
    </location>
</feature>
<feature type="mutagenesis site" description="Forms monomer and exhibits an enhanced ABA affinity." evidence="12">
    <original>I</original>
    <variation>K</variation>
    <location>
        <position position="111"/>
    </location>
</feature>
<feature type="mutagenesis site" description="Reduced binding affinity and inhibitory activity toward ABI1." evidence="6">
    <original>S</original>
    <variation>A</variation>
    <location>
        <position position="112"/>
    </location>
</feature>
<feature type="mutagenesis site" description="Forms homodimer and exhibits an enhanced ABA affinity; when associated with R-117." evidence="12">
    <original>S</original>
    <variation>R</variation>
    <location>
        <position position="112"/>
    </location>
</feature>
<feature type="mutagenesis site" description="Reduced affinity for ABI1." evidence="6">
    <original>L</original>
    <variation>A</variation>
    <location>
        <position position="114"/>
    </location>
</feature>
<feature type="mutagenesis site" description="Reduced affinity for ABI1." evidence="6">
    <original>P</original>
    <variation>A</variation>
    <location>
        <position position="115"/>
    </location>
</feature>
<feature type="mutagenesis site" description="Forms homodimer and exhibits an enhanced ABA affinity; when associated with R-112." evidence="12">
    <original>N</original>
    <variation>R</variation>
    <location>
        <position position="117"/>
    </location>
</feature>
<feature type="mutagenesis site" description="Loss of affinity for ABI1." evidence="6">
    <original>H</original>
    <variation>A</variation>
    <location>
        <position position="142"/>
    </location>
</feature>
<feature type="mutagenesis site" description="Loss of affinity for ABI1." evidence="6">
    <original>R</original>
    <variation>A</variation>
    <location>
        <position position="143"/>
    </location>
</feature>
<feature type="mutagenesis site" description="Loss of affinity for ABI1." evidence="6">
    <original>L</original>
    <variation>A</variation>
    <location>
        <position position="144"/>
    </location>
</feature>
<feature type="mutagenesis site" description="Normal affinity for ABI1." evidence="6">
    <original>P</original>
    <variation>A</variation>
    <location>
        <position position="178"/>
    </location>
</feature>
<feature type="mutagenesis site" description="Reduced affinity for ABI1." evidence="6">
    <original>N</original>
    <variation>A</variation>
    <location>
        <position position="181"/>
    </location>
</feature>
<feature type="mutagenesis site" description="Reduced affinity for ABI1." evidence="6">
    <original>F</original>
    <variation>A</variation>
    <location>
        <position position="189"/>
    </location>
</feature>
<feature type="strand" evidence="17">
    <location>
        <begin position="29"/>
        <end position="31"/>
    </location>
</feature>
<feature type="helix" evidence="16">
    <location>
        <begin position="34"/>
        <end position="47"/>
    </location>
</feature>
<feature type="strand" evidence="16">
    <location>
        <begin position="56"/>
        <end position="67"/>
    </location>
</feature>
<feature type="helix" evidence="16">
    <location>
        <begin position="69"/>
        <end position="76"/>
    </location>
</feature>
<feature type="helix" evidence="16">
    <location>
        <begin position="82"/>
        <end position="84"/>
    </location>
</feature>
<feature type="strand" evidence="16">
    <location>
        <begin position="89"/>
        <end position="93"/>
    </location>
</feature>
<feature type="strand" evidence="16">
    <location>
        <begin position="105"/>
        <end position="110"/>
    </location>
</feature>
<feature type="strand" evidence="18">
    <location>
        <begin position="112"/>
        <end position="115"/>
    </location>
</feature>
<feature type="strand" evidence="16">
    <location>
        <begin position="117"/>
        <end position="127"/>
    </location>
</feature>
<feature type="turn" evidence="16">
    <location>
        <begin position="128"/>
        <end position="131"/>
    </location>
</feature>
<feature type="strand" evidence="16">
    <location>
        <begin position="132"/>
        <end position="143"/>
    </location>
</feature>
<feature type="strand" evidence="16">
    <location>
        <begin position="148"/>
        <end position="176"/>
    </location>
</feature>
<feature type="helix" evidence="16">
    <location>
        <begin position="183"/>
        <end position="208"/>
    </location>
</feature>
<accession>Q8VZS8</accession>
<accession>Q9FIP6</accession>
<proteinExistence type="evidence at protein level"/>
<name>PYL1_ARATH</name>
<sequence>MANSESSSSPVNEEENSQRISTLHHQTMPSDLTQDEFTQLSQSIAEFHTYQLGNGRCSSLLAQRIHAPPETVWSVVRRFDRPQIYKHFIKSCNVSEDFEMRVGCTRDVNVISGLPANTSRERLDLLDDDRRVTGFSITGGEHRLRNYKSVTTVHRFEKEEEEERIWTVVLESYVVDVPEGNSEEDTRLFADTVIRLNLQKLASITEAMNRNNNNNNSSQVR</sequence>
<gene>
    <name type="primary">PYL1</name>
    <name type="synonym">RCAR12</name>
    <name type="ordered locus">At5g46790</name>
    <name type="ORF">MZA15.21</name>
</gene>
<reference key="1">
    <citation type="journal article" date="1998" name="DNA Res.">
        <title>Structural analysis of Arabidopsis thaliana chromosome 5. VIII. Sequence features of the regions of 1,081,958 bp covered by seventeen physically assigned P1 and TAC clones.</title>
        <authorList>
            <person name="Asamizu E."/>
            <person name="Sato S."/>
            <person name="Kaneko T."/>
            <person name="Nakamura Y."/>
            <person name="Kotani H."/>
            <person name="Miyajima N."/>
            <person name="Tabata S."/>
        </authorList>
    </citation>
    <scope>NUCLEOTIDE SEQUENCE [LARGE SCALE GENOMIC DNA]</scope>
    <source>
        <strain>cv. Columbia</strain>
    </source>
</reference>
<reference key="2">
    <citation type="journal article" date="2017" name="Plant J.">
        <title>Araport11: a complete reannotation of the Arabidopsis thaliana reference genome.</title>
        <authorList>
            <person name="Cheng C.Y."/>
            <person name="Krishnakumar V."/>
            <person name="Chan A.P."/>
            <person name="Thibaud-Nissen F."/>
            <person name="Schobel S."/>
            <person name="Town C.D."/>
        </authorList>
    </citation>
    <scope>GENOME REANNOTATION</scope>
    <source>
        <strain>cv. Columbia</strain>
    </source>
</reference>
<reference key="3">
    <citation type="journal article" date="2003" name="Science">
        <title>Empirical analysis of transcriptional activity in the Arabidopsis genome.</title>
        <authorList>
            <person name="Yamada K."/>
            <person name="Lim J."/>
            <person name="Dale J.M."/>
            <person name="Chen H."/>
            <person name="Shinn P."/>
            <person name="Palm C.J."/>
            <person name="Southwick A.M."/>
            <person name="Wu H.C."/>
            <person name="Kim C.J."/>
            <person name="Nguyen M."/>
            <person name="Pham P.K."/>
            <person name="Cheuk R.F."/>
            <person name="Karlin-Newmann G."/>
            <person name="Liu S.X."/>
            <person name="Lam B."/>
            <person name="Sakano H."/>
            <person name="Wu T."/>
            <person name="Yu G."/>
            <person name="Miranda M."/>
            <person name="Quach H.L."/>
            <person name="Tripp M."/>
            <person name="Chang C.H."/>
            <person name="Lee J.M."/>
            <person name="Toriumi M.J."/>
            <person name="Chan M.M."/>
            <person name="Tang C.C."/>
            <person name="Onodera C.S."/>
            <person name="Deng J.M."/>
            <person name="Akiyama K."/>
            <person name="Ansari Y."/>
            <person name="Arakawa T."/>
            <person name="Banh J."/>
            <person name="Banno F."/>
            <person name="Bowser L."/>
            <person name="Brooks S.Y."/>
            <person name="Carninci P."/>
            <person name="Chao Q."/>
            <person name="Choy N."/>
            <person name="Enju A."/>
            <person name="Goldsmith A.D."/>
            <person name="Gurjal M."/>
            <person name="Hansen N.F."/>
            <person name="Hayashizaki Y."/>
            <person name="Johnson-Hopson C."/>
            <person name="Hsuan V.W."/>
            <person name="Iida K."/>
            <person name="Karnes M."/>
            <person name="Khan S."/>
            <person name="Koesema E."/>
            <person name="Ishida J."/>
            <person name="Jiang P.X."/>
            <person name="Jones T."/>
            <person name="Kawai J."/>
            <person name="Kamiya A."/>
            <person name="Meyers C."/>
            <person name="Nakajima M."/>
            <person name="Narusaka M."/>
            <person name="Seki M."/>
            <person name="Sakurai T."/>
            <person name="Satou M."/>
            <person name="Tamse R."/>
            <person name="Vaysberg M."/>
            <person name="Wallender E.K."/>
            <person name="Wong C."/>
            <person name="Yamamura Y."/>
            <person name="Yuan S."/>
            <person name="Shinozaki K."/>
            <person name="Davis R.W."/>
            <person name="Theologis A."/>
            <person name="Ecker J.R."/>
        </authorList>
    </citation>
    <scope>NUCLEOTIDE SEQUENCE [LARGE SCALE MRNA]</scope>
    <source>
        <strain>cv. Columbia</strain>
    </source>
</reference>
<reference key="4">
    <citation type="journal article" date="2010" name="Plant J.">
        <title>PYR/PYL/RCAR family members are major in-vivo ABI1 protein phosphatase 2C-interacting proteins in Arabidopsis.</title>
        <authorList>
            <person name="Nishimura N."/>
            <person name="Sarkeshik A."/>
            <person name="Nito K."/>
            <person name="Park S.-Y."/>
            <person name="Wang A."/>
            <person name="Carvalho P.C."/>
            <person name="Lee S."/>
            <person name="Caddell D.F."/>
            <person name="Cutler S.R."/>
            <person name="Chory J."/>
            <person name="Yates J.R."/>
            <person name="Schroeder J.I."/>
        </authorList>
    </citation>
    <scope>INTERACTION WITH ABI1</scope>
    <scope>IDENTIFICATION BY MASS SPECTROMETRY</scope>
</reference>
<reference key="5">
    <citation type="journal article" date="2009" name="Science">
        <title>Regulators of PP2C phosphatase activity function as abscisic acid sensors.</title>
        <authorList>
            <person name="Ma Y."/>
            <person name="Szostkiewicz I."/>
            <person name="Korte A."/>
            <person name="Moes D."/>
            <person name="Yang Y."/>
            <person name="Christmann A."/>
            <person name="Grill E."/>
        </authorList>
    </citation>
    <scope>FUNCTION</scope>
    <scope>GENE FAMILY</scope>
</reference>
<reference key="6">
    <citation type="journal article" date="2009" name="Science">
        <title>Abscisic acid inhibits type 2C protein phosphatases via the PYR/PYL family of START proteins.</title>
        <authorList>
            <person name="Park S.-Y."/>
            <person name="Fung P."/>
            <person name="Nishimura N."/>
            <person name="Jensen D.R."/>
            <person name="Fujii H."/>
            <person name="Zhao Y."/>
            <person name="Lumba S."/>
            <person name="Santiago J."/>
            <person name="Rodrigues A."/>
            <person name="Chow T.F."/>
            <person name="Alfred S.E."/>
            <person name="Bonetta D."/>
            <person name="Finkelstein R."/>
            <person name="Provart N.J."/>
            <person name="Desveaux D."/>
            <person name="Rodriguez P.L."/>
            <person name="McCourt P."/>
            <person name="Zhu J.-K."/>
            <person name="Schroeder J.I."/>
            <person name="Volkman B.F."/>
            <person name="Cutler S.R."/>
        </authorList>
    </citation>
    <scope>INTERACTION WITH HAB1</scope>
    <scope>GENE FAMILY</scope>
    <scope>NOMENCLATURE</scope>
</reference>
<reference key="7">
    <citation type="journal article" date="2011" name="Mol. Cell">
        <title>The molecular basis of ABA-independent inhibition of PP2Cs by a subclass of PYL proteins.</title>
        <authorList>
            <person name="Hao Q."/>
            <person name="Yin P."/>
            <person name="Li W."/>
            <person name="Wang L."/>
            <person name="Yan C."/>
            <person name="Lin Z."/>
            <person name="Wu J.Z."/>
            <person name="Wang J."/>
            <person name="Yan S.F."/>
            <person name="Yan N."/>
        </authorList>
    </citation>
    <scope>FUNCTION</scope>
    <scope>HOMODIMER</scope>
    <scope>GENE FAMILY</scope>
</reference>
<reference key="8">
    <citation type="journal article" date="2012" name="Mol. Cell. Proteomics">
        <title>Comparative large-scale characterisation of plant vs. mammal proteins reveals similar and idiosyncratic N-alpha acetylation features.</title>
        <authorList>
            <person name="Bienvenut W.V."/>
            <person name="Sumpton D."/>
            <person name="Martinez A."/>
            <person name="Lilla S."/>
            <person name="Espagne C."/>
            <person name="Meinnel T."/>
            <person name="Giglione C."/>
        </authorList>
    </citation>
    <scope>ACETYLATION [LARGE SCALE ANALYSIS] AT ALA-2</scope>
    <scope>CLEAVAGE OF INITIATOR METHIONINE [LARGE SCALE ANALYSIS]</scope>
    <scope>IDENTIFICATION BY MASS SPECTROMETRY [LARGE SCALE ANALYSIS]</scope>
</reference>
<reference key="9">
    <citation type="journal article" date="2013" name="PLoS ONE">
        <title>Structural insights into the abscisic acid stereospecificity by the ABA receptors PYR/PYL/RCAR.</title>
        <authorList>
            <person name="Zhang X."/>
            <person name="Jiang L."/>
            <person name="Wang G."/>
            <person name="Yu L."/>
            <person name="Zhang Q."/>
            <person name="Xin Q."/>
            <person name="Wu W."/>
            <person name="Gong Z."/>
            <person name="Chen Z."/>
        </authorList>
    </citation>
    <scope>FUNCTION</scope>
    <scope>GENE FAMILY</scope>
</reference>
<reference key="10">
    <citation type="journal article" date="2014" name="Genes Cells">
        <title>Mechanism of high-affinity abscisic acid binding to PYL9/RCAR1.</title>
        <authorList>
            <person name="Nakagawa M."/>
            <person name="Kagiyama M."/>
            <person name="Shibata N."/>
            <person name="Hirano Y."/>
            <person name="Hakoshima T."/>
        </authorList>
    </citation>
    <scope>MUTAGENESIS OF HIS-87; PHE-88; LYS-90; ILE-111; SER-112 AND ASN-117</scope>
</reference>
<reference key="11">
    <citation type="journal article" date="2014" name="Plant Cell">
        <title>C2-domain abscisic acid-related proteins mediate the interaction of PYR/PYL/RCAR abscisic acid receptors with the plasma membrane and regulate abscisic acid sensitivity in Arabidopsis.</title>
        <authorList>
            <person name="Rodriguez L."/>
            <person name="Gonzalez-Guzman M."/>
            <person name="Diaz M."/>
            <person name="Rodrigues A."/>
            <person name="Izquierdo-Garcia A.C."/>
            <person name="Peirats-Llobet M."/>
            <person name="Fernandez M.A."/>
            <person name="Antoni R."/>
            <person name="Fernandez D."/>
            <person name="Marquez J.A."/>
            <person name="Mulet J.M."/>
            <person name="Albert A."/>
            <person name="Rodriguez P.L."/>
        </authorList>
    </citation>
    <scope>INTERACTION WITH CAR1 AND CAR4</scope>
    <scope>SUBCELLULAR LOCATION</scope>
</reference>
<reference key="12">
    <citation type="journal article" date="2009" name="Nature">
        <title>A gate-latch-lock mechanism for hormone signalling by abscisic acid receptors.</title>
        <authorList>
            <person name="Melcher K."/>
            <person name="Ng L.-M."/>
            <person name="Zhou X.E."/>
            <person name="Soon F.-F."/>
            <person name="Xu Y."/>
            <person name="Suino-Powell K.M."/>
            <person name="Park S.-Y."/>
            <person name="Weiner J.J."/>
            <person name="Fujii H."/>
            <person name="Chinnusamy V."/>
            <person name="Kovach A."/>
            <person name="Li J."/>
            <person name="Wang Y."/>
            <person name="Li J."/>
            <person name="Peterson F.C."/>
            <person name="Jensen D.R."/>
            <person name="Yong E.-L."/>
            <person name="Volkman B.F."/>
            <person name="Cutler S.R."/>
            <person name="Zhu J.-K."/>
            <person name="Xu H.E."/>
        </authorList>
    </citation>
    <scope>X-RAY CRYSTALLOGRAPHY (2.40 ANGSTROMS) OF 36-211</scope>
    <scope>DIMERIZATION</scope>
    <scope>INTERACTION WITH HAB1; ABI1 AND ABI2</scope>
    <scope>FUNCTION</scope>
    <scope>DOMAIN</scope>
</reference>
<reference key="13">
    <citation type="journal article" date="2009" name="Nature">
        <title>Structural basis of abscisic acid signalling.</title>
        <authorList>
            <person name="Miyazono K.-I."/>
            <person name="Miyakawa T."/>
            <person name="Sawano Y."/>
            <person name="Kubota K."/>
            <person name="Kang H.-J."/>
            <person name="Asano A."/>
            <person name="Miyauchi Y."/>
            <person name="Takahashi M."/>
            <person name="Zhi Y."/>
            <person name="Fujita Y."/>
            <person name="Yoshida T."/>
            <person name="Kodaira K.-S."/>
            <person name="Yamaguchi-Shinozaki K."/>
            <person name="Tanokura M."/>
        </authorList>
    </citation>
    <scope>X-RAY CRYSTALLOGRAPHY (2.05 ANGSTROMS) OF 8-211 IN COMPLEX WITH ABSCISIC ACID AND PP2C ABI1</scope>
    <scope>INTERACTION WITH ABA AND ABI1</scope>
    <scope>MUTAGENESIS OF HIS-87; PHE-88; ILE-111; SER-112; LEU-114; PRO-115; HIS-142; ARG-143; LEU-144; PRO-178; ASN-181 AND PHE-189</scope>
    <scope>FUNCTION</scope>
</reference>
<reference key="14">
    <citation type="journal article" date="2009" name="Nat. Struct. Mol. Biol.">
        <title>Structural insights into the mechanism of abscisic acid signaling by PYL proteins.</title>
        <authorList>
            <person name="Yin P."/>
            <person name="Fan H."/>
            <person name="Hao Q."/>
            <person name="Yuan X."/>
            <person name="Wu D."/>
            <person name="Pang Y."/>
            <person name="Yan C."/>
            <person name="Li W."/>
            <person name="Wang J."/>
            <person name="Yan N."/>
        </authorList>
    </citation>
    <scope>X-RAY CRYSTALLOGRAPHY (1.88 ANGSTROMS) OF 20-221 IN COMPLEX WITH ABSCISIC ACID AND PP2C ABI1</scope>
    <scope>FUNCTION</scope>
</reference>